<keyword id="KW-0002">3D-structure</keyword>
<keyword id="KW-0150">Chloroplast</keyword>
<keyword id="KW-0418">Kinase</keyword>
<keyword id="KW-0547">Nucleotide-binding</keyword>
<keyword id="KW-0934">Plastid</keyword>
<keyword id="KW-1185">Reference proteome</keyword>
<keyword id="KW-0723">Serine/threonine-protein kinase</keyword>
<keyword id="KW-0808">Transferase</keyword>
<keyword id="KW-0809">Transit peptide</keyword>
<reference key="1">
    <citation type="journal article" date="2006" name="Biochem. Biophys. Res. Commun.">
        <title>Cloning and expression of maize-leaf pyruvate, Pi dikinase regulatory protein gene.</title>
        <authorList>
            <person name="Burnell J.N."/>
            <person name="Chastain C.J."/>
        </authorList>
    </citation>
    <scope>NUCLEOTIDE SEQUENCE [MRNA]</scope>
    <scope>EXPRESSION</scope>
    <scope>CHARACTERIZATION</scope>
    <source>
        <tissue>Leaf</tissue>
    </source>
</reference>
<reference key="2">
    <citation type="journal article" date="1984" name="Arch. Biochem. Biophys.">
        <title>Regulation of C4 photosynthesis: identification of a catalytically important histidine residue and its role in the regulation of pyruvate,Pi dikinase.</title>
        <authorList>
            <person name="Burnell J.N."/>
            <person name="Hatch M.D."/>
        </authorList>
    </citation>
    <scope>FUNCTION</scope>
</reference>
<reference key="3">
    <citation type="journal article" date="1985" name="Arch. Biochem. Biophys.">
        <title>Regulation of C4 photosynthesis: purification and properties of the protein catalyzing ADP-mediated inactivation and Pi-mediated activation of pyruvate,Pi dikinase.</title>
        <authorList>
            <person name="Burnell J.N."/>
            <person name="Hatch M.D."/>
        </authorList>
    </citation>
    <scope>CATALYTIC ACTIVITY</scope>
    <scope>BIOPHYSICOCHEMICAL PROPERTIES</scope>
    <scope>COFACTOR</scope>
    <scope>SUBUNIT</scope>
</reference>
<reference key="4">
    <citation type="journal article" date="1988" name="J. Biol. Chem.">
        <title>Sequence of the phosphothreonyl regulatory site peptide from inactive maize leaf pyruvate, orthophosphate dikinase.</title>
        <authorList>
            <person name="Roeske C.A."/>
            <person name="Kutny R.M."/>
            <person name="Budde R.J.A."/>
            <person name="Chollet R."/>
        </authorList>
    </citation>
    <scope>FUNCTION</scope>
</reference>
<reference key="5">
    <citation type="journal article" date="1994" name="Arch. Biochem. Biophys.">
        <title>Partial purification and characterization of maize-leaf pyruvate, orthophosphate dikinase regulatory protein: a low-abundance, mesophyll-chloroplast stromal protein.</title>
        <authorList>
            <person name="Smith C.M."/>
            <person name="Duff S.M."/>
            <person name="Chollet R."/>
        </authorList>
    </citation>
    <scope>SUBCELLULAR LOCATION</scope>
</reference>
<reference key="6">
    <citation type="journal article" date="2000" name="Arch. Biochem. Biophys.">
        <title>Further analysis of maize C(4) pyruvate,orthophosphate dikinase phosphorylation by its bifunctional regulatory protein using selective substitutions of the regulatory Thr-456 and catalytic His-458 residues.</title>
        <authorList>
            <person name="Chastain C.J."/>
            <person name="Botschner M."/>
            <person name="Harrington G.E."/>
            <person name="Thompson B.J."/>
            <person name="Mills S.E."/>
            <person name="Sarath G."/>
            <person name="Chollet R."/>
        </authorList>
    </citation>
    <scope>FUNCTION</scope>
</reference>
<reference key="7">
    <citation type="journal article" date="2011" name="J. Exp. Bot.">
        <title>Functional evolution of C(4) pyruvate, orthophosphate dikinase.</title>
        <authorList>
            <person name="Chastain C.J."/>
            <person name="Failing C.J."/>
            <person name="Manandhar L."/>
            <person name="Zimmerman M.A."/>
            <person name="Lakner M.M."/>
            <person name="Nguyen T.H."/>
        </authorList>
    </citation>
    <scope>FUNCTION</scope>
    <scope>CATALYTIC ACTIVITY</scope>
    <scope>BIOPHYSICOCHEMICAL PROPERTIES</scope>
</reference>
<reference key="8">
    <citation type="journal article" date="2014" name="Plant Physiol.">
        <title>Posttranslational modification of maize chloroplast pyruvate orthophosphate dikinase reveals the precise regulatory mechanism of its enzymatic activity.</title>
        <authorList>
            <person name="Chen Y.B."/>
            <person name="Lu T.C."/>
            <person name="Wang H.X."/>
            <person name="Shen J."/>
            <person name="Bu T.T."/>
            <person name="Chao Q."/>
            <person name="Gao Z.F."/>
            <person name="Zhu X.G."/>
            <person name="Wang Y.F."/>
            <person name="Wang B.C."/>
        </authorList>
    </citation>
    <scope>FUNCTION</scope>
</reference>
<protein>
    <recommendedName>
        <fullName>Pyruvate, phosphate dikinase regulatory protein, chloroplastic</fullName>
        <ecNumber evidence="4 7">2.7.11.32</ecNumber>
        <ecNumber evidence="7">2.7.4.27</ecNumber>
    </recommendedName>
    <alternativeName>
        <fullName>Bifunctional dikinase regulatory protein</fullName>
        <shortName>BFRP</shortName>
    </alternativeName>
    <alternativeName>
        <fullName>Pyruvate, Pi dikinase regulatory protein</fullName>
        <shortName>PPDK RP</shortName>
        <shortName>PPDK regulatory protein</shortName>
    </alternativeName>
</protein>
<organism>
    <name type="scientific">Zea mays</name>
    <name type="common">Maize</name>
    <dbReference type="NCBI Taxonomy" id="4577"/>
    <lineage>
        <taxon>Eukaryota</taxon>
        <taxon>Viridiplantae</taxon>
        <taxon>Streptophyta</taxon>
        <taxon>Embryophyta</taxon>
        <taxon>Tracheophyta</taxon>
        <taxon>Spermatophyta</taxon>
        <taxon>Magnoliopsida</taxon>
        <taxon>Liliopsida</taxon>
        <taxon>Poales</taxon>
        <taxon>Poaceae</taxon>
        <taxon>PACMAD clade</taxon>
        <taxon>Panicoideae</taxon>
        <taxon>Andropogonodae</taxon>
        <taxon>Andropogoneae</taxon>
        <taxon>Tripsacinae</taxon>
        <taxon>Zea</taxon>
    </lineage>
</organism>
<sequence length="426" mass="45905">MIGCAKPLAAPLQAWARPPSPAGRRLPPSFCAPDTSPALTRAVESPGQSQSDDAPPPRSGEAASSLAPRASSHLDRWSRSRALRSGHRPALNRAALSSASVSAPPVIKSPRPEDAAVAAEDGEDDDVCEAERDAAAGKAIYIVSDGTGWTAEHSVNAALGQFENCLADRGCAVNTHLFSLIDDMDRLIEVIKQAAKEGALVLYTLADPSMAEATKKACDFWGVPCTDVLRPTVEAIASHIGVAPSGIPRSFPSRNGRLSEDYFQRIDAIDFTIKQDDGVLPQNFYRADIVLAGVSRTGKTPLSIYLAQKGYKVANVPIVMGVALPKSLFEINQDKVFGLTINPAILQGIRKTRAKTLGFDGRQSNYAEMDHVRQELVHANQIFVQNPWWPVIAVTGKAIEETAAVILGILHDRKQKCSMPRISKRY</sequence>
<feature type="transit peptide" description="Chloroplast" evidence="1">
    <location>
        <begin position="1"/>
        <end position="41"/>
    </location>
</feature>
<feature type="chain" id="PRO_0000315393" description="Pyruvate, phosphate dikinase regulatory protein, chloroplastic">
    <location>
        <begin position="42"/>
        <end position="426"/>
    </location>
</feature>
<feature type="region of interest" description="Disordered" evidence="2">
    <location>
        <begin position="1"/>
        <end position="76"/>
    </location>
</feature>
<feature type="region of interest" description="Disordered" evidence="2">
    <location>
        <begin position="94"/>
        <end position="124"/>
    </location>
</feature>
<feature type="compositionally biased region" description="Low complexity" evidence="2">
    <location>
        <begin position="94"/>
        <end position="119"/>
    </location>
</feature>
<feature type="binding site" evidence="1">
    <location>
        <begin position="153"/>
        <end position="160"/>
    </location>
    <ligand>
        <name>ADP</name>
        <dbReference type="ChEBI" id="CHEBI:456216"/>
    </ligand>
</feature>
<feature type="strand" evidence="11">
    <location>
        <begin position="137"/>
        <end position="146"/>
    </location>
</feature>
<feature type="helix" evidence="11">
    <location>
        <begin position="149"/>
        <end position="159"/>
    </location>
</feature>
<feature type="helix" evidence="11">
    <location>
        <begin position="160"/>
        <end position="162"/>
    </location>
</feature>
<feature type="helix" evidence="11">
    <location>
        <begin position="163"/>
        <end position="167"/>
    </location>
</feature>
<feature type="strand" evidence="11">
    <location>
        <begin position="173"/>
        <end position="178"/>
    </location>
</feature>
<feature type="helix" evidence="11">
    <location>
        <begin position="184"/>
        <end position="197"/>
    </location>
</feature>
<feature type="strand" evidence="11">
    <location>
        <begin position="199"/>
        <end position="204"/>
    </location>
</feature>
<feature type="helix" evidence="11">
    <location>
        <begin position="208"/>
        <end position="221"/>
    </location>
</feature>
<feature type="strand" evidence="11">
    <location>
        <begin position="225"/>
        <end position="229"/>
    </location>
</feature>
<feature type="helix" evidence="11">
    <location>
        <begin position="230"/>
        <end position="240"/>
    </location>
</feature>
<feature type="strand" evidence="12">
    <location>
        <begin position="249"/>
        <end position="252"/>
    </location>
</feature>
<feature type="helix" evidence="11">
    <location>
        <begin position="260"/>
        <end position="273"/>
    </location>
</feature>
<feature type="helix" evidence="12">
    <location>
        <begin position="277"/>
        <end position="279"/>
    </location>
</feature>
<feature type="helix" evidence="11">
    <location>
        <begin position="280"/>
        <end position="286"/>
    </location>
</feature>
<feature type="strand" evidence="11">
    <location>
        <begin position="288"/>
        <end position="293"/>
    </location>
</feature>
<feature type="helix" evidence="11">
    <location>
        <begin position="299"/>
        <end position="309"/>
    </location>
</feature>
<feature type="strand" evidence="11">
    <location>
        <begin position="313"/>
        <end position="317"/>
    </location>
</feature>
<feature type="helix" evidence="11">
    <location>
        <begin position="327"/>
        <end position="330"/>
    </location>
</feature>
<feature type="helix" evidence="12">
    <location>
        <begin position="333"/>
        <end position="335"/>
    </location>
</feature>
<feature type="strand" evidence="11">
    <location>
        <begin position="336"/>
        <end position="340"/>
    </location>
</feature>
<feature type="helix" evidence="11">
    <location>
        <begin position="371"/>
        <end position="385"/>
    </location>
</feature>
<feature type="strand" evidence="11">
    <location>
        <begin position="391"/>
        <end position="393"/>
    </location>
</feature>
<feature type="helix" evidence="11">
    <location>
        <begin position="399"/>
        <end position="414"/>
    </location>
</feature>
<comment type="function">
    <text evidence="3 4 5 6 8">Bifunctional serine/threonine kinase and phosphorylase involved in the dark/light-mediated regulation of PPDK by catalyzing its phosphorylation/dephosphorylation. Dark/light-induced changes in stromal concentrations of the competing ADP and Pi substrates govern the direction of the reaction. In the dark, phosphorylates the catalytic intermediate of PPDK (PPDK-HisP), inactivating it. Light exposure induces the phosphorolysis reaction that reactivates PPDK. Phosphorylates PPDK at both Ser-528 and Thr-527 (PubMed:24710069). Can use ADP as a high specificity substrate and GDP as a lower affinity substrate, but has no activity with UDP (PubMed:21414960).</text>
</comment>
<comment type="catalytic activity">
    <reaction evidence="4 7">
        <text>N(tele)-phospho-L-histidyl/L-threonyl-[pyruvate, phosphate dikinase] + ADP = N(tele)-phospho-L-histidyl/O-phospho-L-threonyl-[pyruvate, phosphate dikinase] + AMP + H(+)</text>
        <dbReference type="Rhea" id="RHEA:43692"/>
        <dbReference type="Rhea" id="RHEA-COMP:10650"/>
        <dbReference type="Rhea" id="RHEA-COMP:10651"/>
        <dbReference type="ChEBI" id="CHEBI:15378"/>
        <dbReference type="ChEBI" id="CHEBI:30013"/>
        <dbReference type="ChEBI" id="CHEBI:61977"/>
        <dbReference type="ChEBI" id="CHEBI:83586"/>
        <dbReference type="ChEBI" id="CHEBI:456215"/>
        <dbReference type="ChEBI" id="CHEBI:456216"/>
        <dbReference type="EC" id="2.7.11.32"/>
    </reaction>
</comment>
<comment type="catalytic activity">
    <reaction evidence="7">
        <text>N(tele)-phospho-L-histidyl/O-phospho-L-threonyl-[pyruvate, phosphate dikinase] + phosphate + H(+) = N(tele)-phospho-L-histidyl/L-threonyl-[pyruvate, phosphate dikinase] + diphosphate</text>
        <dbReference type="Rhea" id="RHEA:43696"/>
        <dbReference type="Rhea" id="RHEA-COMP:10650"/>
        <dbReference type="Rhea" id="RHEA-COMP:10651"/>
        <dbReference type="ChEBI" id="CHEBI:15378"/>
        <dbReference type="ChEBI" id="CHEBI:30013"/>
        <dbReference type="ChEBI" id="CHEBI:33019"/>
        <dbReference type="ChEBI" id="CHEBI:43474"/>
        <dbReference type="ChEBI" id="CHEBI:61977"/>
        <dbReference type="ChEBI" id="CHEBI:83586"/>
        <dbReference type="EC" id="2.7.4.27"/>
    </reaction>
</comment>
<comment type="cofactor">
    <cofactor evidence="7">
        <name>Mg(2+)</name>
        <dbReference type="ChEBI" id="CHEBI:18420"/>
    </cofactor>
</comment>
<comment type="activity regulation">
    <text>Regulated by light/dark exposure.</text>
</comment>
<comment type="biophysicochemical properties">
    <kinetics>
        <KM evidence="7">52 uM for ADP</KM>
        <KM evidence="7">1.2 uM for [pyruvate, phosphate dikinase]</KM>
        <KM evidence="7">0.7 mM for phosphate</KM>
        <KM evidence="7">0.7 uM for [Pyruvate, phosphate dikinase] phosphate</KM>
    </kinetics>
    <phDependence>
        <text evidence="7">Optimum pH is 7.8-8.4 for both catalytic activities.</text>
    </phDependence>
</comment>
<comment type="pathway">
    <text>Photosynthesis; C4 acid pathway.</text>
</comment>
<comment type="subunit">
    <text evidence="7">homodimer at pH 7.5 and homotetramer at pH 8.3.</text>
</comment>
<comment type="subcellular location">
    <subcellularLocation>
        <location evidence="9">Plastid</location>
        <location evidence="9">Chloroplast stroma</location>
    </subcellularLocation>
</comment>
<comment type="tissue specificity">
    <text>Leaf mesophyll-cells.</text>
</comment>
<comment type="similarity">
    <text evidence="10">Belongs to the pyruvate, phosphate/water dikinase regulatory protein family. PDRP subfamily.</text>
</comment>
<proteinExistence type="evidence at protein level"/>
<name>PDRP1_MAIZE</name>
<dbReference type="EC" id="2.7.11.32" evidence="4 7"/>
<dbReference type="EC" id="2.7.4.27" evidence="7"/>
<dbReference type="EMBL" id="DQ645424">
    <property type="protein sequence ID" value="ABG00151.1"/>
    <property type="molecule type" value="mRNA"/>
</dbReference>
<dbReference type="PDB" id="5D0N">
    <property type="method" value="X-ray"/>
    <property type="resolution" value="3.20 A"/>
    <property type="chains" value="A=38-426"/>
</dbReference>
<dbReference type="PDB" id="5D1F">
    <property type="method" value="X-ray"/>
    <property type="resolution" value="3.40 A"/>
    <property type="chains" value="A=38-426"/>
</dbReference>
<dbReference type="PDBsum" id="5D0N"/>
<dbReference type="PDBsum" id="5D1F"/>
<dbReference type="SMR" id="Q195N6"/>
<dbReference type="FunCoup" id="Q195N6">
    <property type="interactions" value="759"/>
</dbReference>
<dbReference type="STRING" id="4577.Q195N6"/>
<dbReference type="PaxDb" id="4577-GRMZM2G131286_P01"/>
<dbReference type="MaizeGDB" id="293064"/>
<dbReference type="eggNOG" id="ENOG502QQ1R">
    <property type="taxonomic scope" value="Eukaryota"/>
</dbReference>
<dbReference type="InParanoid" id="Q195N6"/>
<dbReference type="BRENDA" id="2.7.4.27">
    <property type="organism ID" value="6752"/>
</dbReference>
<dbReference type="UniPathway" id="UPA00322"/>
<dbReference type="EvolutionaryTrace" id="Q195N6"/>
<dbReference type="Proteomes" id="UP000007305">
    <property type="component" value="Unplaced"/>
</dbReference>
<dbReference type="ExpressionAtlas" id="Q195N6">
    <property type="expression patterns" value="baseline and differential"/>
</dbReference>
<dbReference type="GO" id="GO:0009570">
    <property type="term" value="C:chloroplast stroma"/>
    <property type="evidence" value="ECO:0007669"/>
    <property type="project" value="UniProtKB-SubCell"/>
</dbReference>
<dbReference type="GO" id="GO:0005524">
    <property type="term" value="F:ATP binding"/>
    <property type="evidence" value="ECO:0007669"/>
    <property type="project" value="InterPro"/>
</dbReference>
<dbReference type="GO" id="GO:0016776">
    <property type="term" value="F:phosphotransferase activity, phosphate group as acceptor"/>
    <property type="evidence" value="ECO:0007669"/>
    <property type="project" value="InterPro"/>
</dbReference>
<dbReference type="GO" id="GO:0004674">
    <property type="term" value="F:protein serine/threonine kinase activity"/>
    <property type="evidence" value="ECO:0007669"/>
    <property type="project" value="UniProtKB-KW"/>
</dbReference>
<dbReference type="HAMAP" id="MF_00921">
    <property type="entry name" value="PDRP"/>
    <property type="match status" value="1"/>
</dbReference>
<dbReference type="InterPro" id="IPR005177">
    <property type="entry name" value="Kinase-pyrophosphorylase"/>
</dbReference>
<dbReference type="InterPro" id="IPR026565">
    <property type="entry name" value="PPDK_reg"/>
</dbReference>
<dbReference type="InterPro" id="IPR017409">
    <property type="entry name" value="Pyrv_Pi_dikinase_reg_chlpt"/>
</dbReference>
<dbReference type="NCBIfam" id="NF003742">
    <property type="entry name" value="PRK05339.1"/>
    <property type="match status" value="1"/>
</dbReference>
<dbReference type="PANTHER" id="PTHR31756">
    <property type="entry name" value="PYRUVATE, PHOSPHATE DIKINASE REGULATORY PROTEIN 1, CHLOROPLASTIC"/>
    <property type="match status" value="1"/>
</dbReference>
<dbReference type="PANTHER" id="PTHR31756:SF3">
    <property type="entry name" value="PYRUVATE, PHOSPHATE DIKINASE REGULATORY PROTEIN 1, CHLOROPLASTIC"/>
    <property type="match status" value="1"/>
</dbReference>
<dbReference type="Pfam" id="PF03618">
    <property type="entry name" value="Kinase-PPPase"/>
    <property type="match status" value="1"/>
</dbReference>
<dbReference type="PIRSF" id="PIRSF038149">
    <property type="entry name" value="Pyruvate_Pi_dikinase_regulator"/>
    <property type="match status" value="1"/>
</dbReference>
<accession>Q195N6</accession>
<evidence type="ECO:0000255" key="1"/>
<evidence type="ECO:0000256" key="2">
    <source>
        <dbReference type="SAM" id="MobiDB-lite"/>
    </source>
</evidence>
<evidence type="ECO:0000269" key="3">
    <source>
    </source>
</evidence>
<evidence type="ECO:0000269" key="4">
    <source>
    </source>
</evidence>
<evidence type="ECO:0000269" key="5">
    <source>
    </source>
</evidence>
<evidence type="ECO:0000269" key="6">
    <source>
    </source>
</evidence>
<evidence type="ECO:0000269" key="7">
    <source>
    </source>
</evidence>
<evidence type="ECO:0000269" key="8">
    <source>
    </source>
</evidence>
<evidence type="ECO:0000269" key="9">
    <source>
    </source>
</evidence>
<evidence type="ECO:0000305" key="10"/>
<evidence type="ECO:0007829" key="11">
    <source>
        <dbReference type="PDB" id="5D0N"/>
    </source>
</evidence>
<evidence type="ECO:0007829" key="12">
    <source>
        <dbReference type="PDB" id="5D1F"/>
    </source>
</evidence>
<gene>
    <name type="primary">PDRP1</name>
</gene>